<accession>Q58738</accession>
<gene>
    <name type="ordered locus">MJ1342</name>
</gene>
<name>Y1342_METJA</name>
<dbReference type="EMBL" id="L77117">
    <property type="protein sequence ID" value="AAB99359.1"/>
    <property type="molecule type" value="Genomic_DNA"/>
</dbReference>
<dbReference type="PIR" id="E64467">
    <property type="entry name" value="E64467"/>
</dbReference>
<dbReference type="RefSeq" id="WP_010870860.1">
    <property type="nucleotide sequence ID" value="NC_000909.1"/>
</dbReference>
<dbReference type="PaxDb" id="243232-MJ_1342"/>
<dbReference type="EnsemblBacteria" id="AAB99359">
    <property type="protein sequence ID" value="AAB99359"/>
    <property type="gene ID" value="MJ_1342"/>
</dbReference>
<dbReference type="GeneID" id="1452245"/>
<dbReference type="KEGG" id="mja:MJ_1342"/>
<dbReference type="eggNOG" id="arCOG07626">
    <property type="taxonomic scope" value="Archaea"/>
</dbReference>
<dbReference type="HOGENOM" id="CLU_143938_0_0_2"/>
<dbReference type="InParanoid" id="Q58738"/>
<dbReference type="Proteomes" id="UP000000805">
    <property type="component" value="Chromosome"/>
</dbReference>
<proteinExistence type="predicted"/>
<sequence>MLWVLGGKKIAKCLKETVNPKEIEDKELIKFLINFCDMCNDFVIDDEKIGIKIDKCKYCPKQIGEAEIPGSACPIPSILASCMRELTKKDYKINLWDGNKVIIKENGYCWFRIK</sequence>
<organism>
    <name type="scientific">Methanocaldococcus jannaschii (strain ATCC 43067 / DSM 2661 / JAL-1 / JCM 10045 / NBRC 100440)</name>
    <name type="common">Methanococcus jannaschii</name>
    <dbReference type="NCBI Taxonomy" id="243232"/>
    <lineage>
        <taxon>Archaea</taxon>
        <taxon>Methanobacteriati</taxon>
        <taxon>Methanobacteriota</taxon>
        <taxon>Methanomada group</taxon>
        <taxon>Methanococci</taxon>
        <taxon>Methanococcales</taxon>
        <taxon>Methanocaldococcaceae</taxon>
        <taxon>Methanocaldococcus</taxon>
    </lineage>
</organism>
<protein>
    <recommendedName>
        <fullName>Uncharacterized protein MJ1342</fullName>
    </recommendedName>
</protein>
<feature type="chain" id="PRO_0000107286" description="Uncharacterized protein MJ1342">
    <location>
        <begin position="1"/>
        <end position="114"/>
    </location>
</feature>
<reference key="1">
    <citation type="journal article" date="1996" name="Science">
        <title>Complete genome sequence of the methanogenic archaeon, Methanococcus jannaschii.</title>
        <authorList>
            <person name="Bult C.J."/>
            <person name="White O."/>
            <person name="Olsen G.J."/>
            <person name="Zhou L."/>
            <person name="Fleischmann R.D."/>
            <person name="Sutton G.G."/>
            <person name="Blake J.A."/>
            <person name="FitzGerald L.M."/>
            <person name="Clayton R.A."/>
            <person name="Gocayne J.D."/>
            <person name="Kerlavage A.R."/>
            <person name="Dougherty B.A."/>
            <person name="Tomb J.-F."/>
            <person name="Adams M.D."/>
            <person name="Reich C.I."/>
            <person name="Overbeek R."/>
            <person name="Kirkness E.F."/>
            <person name="Weinstock K.G."/>
            <person name="Merrick J.M."/>
            <person name="Glodek A."/>
            <person name="Scott J.L."/>
            <person name="Geoghagen N.S.M."/>
            <person name="Weidman J.F."/>
            <person name="Fuhrmann J.L."/>
            <person name="Nguyen D."/>
            <person name="Utterback T.R."/>
            <person name="Kelley J.M."/>
            <person name="Peterson J.D."/>
            <person name="Sadow P.W."/>
            <person name="Hanna M.C."/>
            <person name="Cotton M.D."/>
            <person name="Roberts K.M."/>
            <person name="Hurst M.A."/>
            <person name="Kaine B.P."/>
            <person name="Borodovsky M."/>
            <person name="Klenk H.-P."/>
            <person name="Fraser C.M."/>
            <person name="Smith H.O."/>
            <person name="Woese C.R."/>
            <person name="Venter J.C."/>
        </authorList>
    </citation>
    <scope>NUCLEOTIDE SEQUENCE [LARGE SCALE GENOMIC DNA]</scope>
    <source>
        <strain>ATCC 43067 / DSM 2661 / JAL-1 / JCM 10045 / NBRC 100440</strain>
    </source>
</reference>
<keyword id="KW-1185">Reference proteome</keyword>